<name>MSH2_MOUSE</name>
<feature type="initiator methionine" description="Removed" evidence="2">
    <location>
        <position position="1"/>
    </location>
</feature>
<feature type="chain" id="PRO_0000115184" description="DNA mismatch repair protein Msh2">
    <location>
        <begin position="2"/>
        <end position="935"/>
    </location>
</feature>
<feature type="region of interest" description="Interaction with EXO1" evidence="1">
    <location>
        <begin position="601"/>
        <end position="671"/>
    </location>
</feature>
<feature type="binding site" evidence="3">
    <location>
        <begin position="669"/>
        <end position="676"/>
    </location>
    <ligand>
        <name>ATP</name>
        <dbReference type="ChEBI" id="CHEBI:30616"/>
    </ligand>
</feature>
<feature type="modified residue" description="N-acetylalanine" evidence="2">
    <location>
        <position position="2"/>
    </location>
</feature>
<feature type="modified residue" description="N6-acetyllysine" evidence="5">
    <location>
        <position position="567"/>
    </location>
</feature>
<feature type="modified residue" description="N6-acetyllysine" evidence="2">
    <location>
        <position position="845"/>
    </location>
</feature>
<feature type="modified residue" description="N6-acetyllysine" evidence="2">
    <location>
        <position position="847"/>
    </location>
</feature>
<feature type="modified residue" description="N6-acetyllysine" evidence="2">
    <location>
        <position position="871"/>
    </location>
</feature>
<feature type="modified residue" description="N6-acetyllysine" evidence="2">
    <location>
        <position position="892"/>
    </location>
</feature>
<feature type="modified residue" description="Phosphoserine" evidence="2">
    <location>
        <position position="921"/>
    </location>
</feature>
<feature type="cross-link" description="Glycyl lysine isopeptide (Lys-Gly) (interchain with G-Cter in ubiquitin)" evidence="2">
    <location>
        <position position="845"/>
    </location>
</feature>
<feature type="cross-link" description="Glycyl lysine isopeptide (Lys-Gly) (interchain with G-Cter in ubiquitin)" evidence="2">
    <location>
        <position position="847"/>
    </location>
</feature>
<feature type="cross-link" description="Glycyl lysine isopeptide (Lys-Gly) (interchain with G-Cter in ubiquitin)" evidence="2">
    <location>
        <position position="871"/>
    </location>
</feature>
<feature type="cross-link" description="Glycyl lysine isopeptide (Lys-Gly) (interchain with G-Cter in ubiquitin)" evidence="2">
    <location>
        <position position="892"/>
    </location>
</feature>
<feature type="sequence conflict" description="In Ref. 2; AAA75027." evidence="4" ref="2">
    <original>A</original>
    <variation>S</variation>
    <location>
        <position position="733"/>
    </location>
</feature>
<reference key="1">
    <citation type="journal article" date="1994" name="Nucleic Acids Res.">
        <title>Cloning and expression of the Xenopus and mouse Msh2 DNA mismatch repair genes.</title>
        <authorList>
            <person name="Varlet I."/>
            <person name="Pallard C."/>
            <person name="Radman M."/>
            <person name="Moreau J."/>
            <person name="de Wind N."/>
        </authorList>
    </citation>
    <scope>NUCLEOTIDE SEQUENCE [MRNA]</scope>
    <source>
        <strain>BALB/cJ</strain>
    </source>
</reference>
<reference key="2">
    <citation type="submission" date="1995-04" db="EMBL/GenBank/DDBJ databases">
        <title>Mouse MutS homolog 2 (mMSH2) c-DNA sequence from -56.</title>
        <authorList>
            <person name="Lipford J.R."/>
            <person name="Kane M.F."/>
            <person name="Kolodner R.D."/>
        </authorList>
    </citation>
    <scope>NUCLEOTIDE SEQUENCE [MRNA]</scope>
</reference>
<reference key="3">
    <citation type="journal article" date="2004" name="Genome Res.">
        <title>The status, quality, and expansion of the NIH full-length cDNA project: the Mammalian Gene Collection (MGC).</title>
        <authorList>
            <consortium name="The MGC Project Team"/>
        </authorList>
    </citation>
    <scope>NUCLEOTIDE SEQUENCE [LARGE SCALE MRNA]</scope>
    <source>
        <strain>FVB/N</strain>
        <tissue>Mammary gland</tissue>
    </source>
</reference>
<reference key="4">
    <citation type="journal article" date="2010" name="Cell">
        <title>A tissue-specific atlas of mouse protein phosphorylation and expression.</title>
        <authorList>
            <person name="Huttlin E.L."/>
            <person name="Jedrychowski M.P."/>
            <person name="Elias J.E."/>
            <person name="Goswami T."/>
            <person name="Rad R."/>
            <person name="Beausoleil S.A."/>
            <person name="Villen J."/>
            <person name="Haas W."/>
            <person name="Sowa M.E."/>
            <person name="Gygi S.P."/>
        </authorList>
    </citation>
    <scope>IDENTIFICATION BY MASS SPECTROMETRY [LARGE SCALE ANALYSIS]</scope>
    <source>
        <tissue>Brain</tissue>
        <tissue>Brown adipose tissue</tissue>
        <tissue>Heart</tissue>
        <tissue>Kidney</tissue>
        <tissue>Liver</tissue>
        <tissue>Lung</tissue>
        <tissue>Spleen</tissue>
        <tissue>Testis</tissue>
    </source>
</reference>
<reference key="5">
    <citation type="journal article" date="2013" name="Mol. Cell">
        <title>SIRT5-mediated lysine desuccinylation impacts diverse metabolic pathways.</title>
        <authorList>
            <person name="Park J."/>
            <person name="Chen Y."/>
            <person name="Tishkoff D.X."/>
            <person name="Peng C."/>
            <person name="Tan M."/>
            <person name="Dai L."/>
            <person name="Xie Z."/>
            <person name="Zhang Y."/>
            <person name="Zwaans B.M."/>
            <person name="Skinner M.E."/>
            <person name="Lombard D.B."/>
            <person name="Zhao Y."/>
        </authorList>
    </citation>
    <scope>ACETYLATION [LARGE SCALE ANALYSIS] AT LYS-567</scope>
    <scope>IDENTIFICATION BY MASS SPECTROMETRY [LARGE SCALE ANALYSIS]</scope>
    <source>
        <tissue>Embryonic fibroblast</tissue>
    </source>
</reference>
<keyword id="KW-0007">Acetylation</keyword>
<keyword id="KW-0067">ATP-binding</keyword>
<keyword id="KW-0131">Cell cycle</keyword>
<keyword id="KW-0158">Chromosome</keyword>
<keyword id="KW-0227">DNA damage</keyword>
<keyword id="KW-0234">DNA repair</keyword>
<keyword id="KW-0238">DNA-binding</keyword>
<keyword id="KW-1017">Isopeptide bond</keyword>
<keyword id="KW-0547">Nucleotide-binding</keyword>
<keyword id="KW-0539">Nucleus</keyword>
<keyword id="KW-0597">Phosphoprotein</keyword>
<keyword id="KW-1185">Reference proteome</keyword>
<keyword id="KW-0832">Ubl conjugation</keyword>
<evidence type="ECO:0000250" key="1"/>
<evidence type="ECO:0000250" key="2">
    <source>
        <dbReference type="UniProtKB" id="P43246"/>
    </source>
</evidence>
<evidence type="ECO:0000255" key="3"/>
<evidence type="ECO:0000305" key="4"/>
<evidence type="ECO:0007744" key="5">
    <source>
    </source>
</evidence>
<dbReference type="EMBL" id="X81143">
    <property type="protein sequence ID" value="CAA57049.1"/>
    <property type="molecule type" value="mRNA"/>
</dbReference>
<dbReference type="EMBL" id="U21011">
    <property type="protein sequence ID" value="AAA75027.1"/>
    <property type="molecule type" value="mRNA"/>
</dbReference>
<dbReference type="EMBL" id="BC047117">
    <property type="protein sequence ID" value="AAH47117.1"/>
    <property type="molecule type" value="mRNA"/>
</dbReference>
<dbReference type="CCDS" id="CCDS29019.1"/>
<dbReference type="PIR" id="S53608">
    <property type="entry name" value="S53608"/>
</dbReference>
<dbReference type="RefSeq" id="NP_032654.1">
    <property type="nucleotide sequence ID" value="NM_008628.3"/>
</dbReference>
<dbReference type="SMR" id="P43247"/>
<dbReference type="BioGRID" id="201525">
    <property type="interactions" value="12"/>
</dbReference>
<dbReference type="ComplexPortal" id="CPX-78">
    <property type="entry name" value="DNA mismatch repair MutSbeta complex"/>
</dbReference>
<dbReference type="ComplexPortal" id="CPX-81">
    <property type="entry name" value="DNA mismatch repair MutSalpha complex"/>
</dbReference>
<dbReference type="CORUM" id="P43247"/>
<dbReference type="DIP" id="DIP-57027N"/>
<dbReference type="FunCoup" id="P43247">
    <property type="interactions" value="4104"/>
</dbReference>
<dbReference type="IntAct" id="P43247">
    <property type="interactions" value="4"/>
</dbReference>
<dbReference type="MINT" id="P43247"/>
<dbReference type="STRING" id="10090.ENSMUSP00000024967"/>
<dbReference type="GlyGen" id="P43247">
    <property type="glycosylation" value="1 site, 1 O-linked glycan (1 site)"/>
</dbReference>
<dbReference type="iPTMnet" id="P43247"/>
<dbReference type="PhosphoSitePlus" id="P43247"/>
<dbReference type="jPOST" id="P43247"/>
<dbReference type="PaxDb" id="10090-ENSMUSP00000024967"/>
<dbReference type="PeptideAtlas" id="P43247"/>
<dbReference type="ProteomicsDB" id="290098"/>
<dbReference type="Pumba" id="P43247"/>
<dbReference type="Antibodypedia" id="4037">
    <property type="antibodies" value="799 antibodies from 49 providers"/>
</dbReference>
<dbReference type="DNASU" id="17685"/>
<dbReference type="Ensembl" id="ENSMUST00000024967.14">
    <property type="protein sequence ID" value="ENSMUSP00000024967.8"/>
    <property type="gene ID" value="ENSMUSG00000024151.14"/>
</dbReference>
<dbReference type="GeneID" id="17685"/>
<dbReference type="KEGG" id="mmu:17685"/>
<dbReference type="UCSC" id="uc008dva.1">
    <property type="organism name" value="mouse"/>
</dbReference>
<dbReference type="AGR" id="MGI:101816"/>
<dbReference type="CTD" id="4436"/>
<dbReference type="MGI" id="MGI:101816">
    <property type="gene designation" value="Msh2"/>
</dbReference>
<dbReference type="VEuPathDB" id="HostDB:ENSMUSG00000024151"/>
<dbReference type="eggNOG" id="KOG0219">
    <property type="taxonomic scope" value="Eukaryota"/>
</dbReference>
<dbReference type="GeneTree" id="ENSGT00550000074867"/>
<dbReference type="HOGENOM" id="CLU_002472_10_0_1"/>
<dbReference type="InParanoid" id="P43247"/>
<dbReference type="OMA" id="LVRFPQK"/>
<dbReference type="OrthoDB" id="295033at2759"/>
<dbReference type="PhylomeDB" id="P43247"/>
<dbReference type="TreeFam" id="TF351780"/>
<dbReference type="Reactome" id="R-MMU-5358565">
    <property type="pathway name" value="Mismatch repair (MMR) directed by MSH2:MSH6 (MutSalpha)"/>
</dbReference>
<dbReference type="Reactome" id="R-MMU-5358606">
    <property type="pathway name" value="Mismatch repair (MMR) directed by MSH2:MSH3 (MutSbeta)"/>
</dbReference>
<dbReference type="BioGRID-ORCS" id="17685">
    <property type="hits" value="15 hits in 117 CRISPR screens"/>
</dbReference>
<dbReference type="ChiTaRS" id="Msh2">
    <property type="organism name" value="mouse"/>
</dbReference>
<dbReference type="PRO" id="PR:P43247"/>
<dbReference type="Proteomes" id="UP000000589">
    <property type="component" value="Chromosome 17"/>
</dbReference>
<dbReference type="RNAct" id="P43247">
    <property type="molecule type" value="protein"/>
</dbReference>
<dbReference type="Bgee" id="ENSMUSG00000024151">
    <property type="expression patterns" value="Expressed in primitive streak and 270 other cell types or tissues"/>
</dbReference>
<dbReference type="ExpressionAtlas" id="P43247">
    <property type="expression patterns" value="baseline and differential"/>
</dbReference>
<dbReference type="GO" id="GO:0005694">
    <property type="term" value="C:chromosome"/>
    <property type="evidence" value="ECO:0007669"/>
    <property type="project" value="UniProtKB-SubCell"/>
</dbReference>
<dbReference type="GO" id="GO:0032301">
    <property type="term" value="C:MutSalpha complex"/>
    <property type="evidence" value="ECO:0000314"/>
    <property type="project" value="MGI"/>
</dbReference>
<dbReference type="GO" id="GO:0032302">
    <property type="term" value="C:MutSbeta complex"/>
    <property type="evidence" value="ECO:0000266"/>
    <property type="project" value="ComplexPortal"/>
</dbReference>
<dbReference type="GO" id="GO:0005654">
    <property type="term" value="C:nucleoplasm"/>
    <property type="evidence" value="ECO:0007669"/>
    <property type="project" value="Ensembl"/>
</dbReference>
<dbReference type="GO" id="GO:0005634">
    <property type="term" value="C:nucleus"/>
    <property type="evidence" value="ECO:0000314"/>
    <property type="project" value="MGI"/>
</dbReference>
<dbReference type="GO" id="GO:0043531">
    <property type="term" value="F:ADP binding"/>
    <property type="evidence" value="ECO:0007669"/>
    <property type="project" value="Ensembl"/>
</dbReference>
<dbReference type="GO" id="GO:0005524">
    <property type="term" value="F:ATP binding"/>
    <property type="evidence" value="ECO:0007669"/>
    <property type="project" value="UniProtKB-KW"/>
</dbReference>
<dbReference type="GO" id="GO:0016887">
    <property type="term" value="F:ATP hydrolysis activity"/>
    <property type="evidence" value="ECO:0000315"/>
    <property type="project" value="MGI"/>
</dbReference>
<dbReference type="GO" id="GO:0140664">
    <property type="term" value="F:ATP-dependent DNA damage sensor activity"/>
    <property type="evidence" value="ECO:0007669"/>
    <property type="project" value="InterPro"/>
</dbReference>
<dbReference type="GO" id="GO:0019237">
    <property type="term" value="F:centromeric DNA binding"/>
    <property type="evidence" value="ECO:0000314"/>
    <property type="project" value="MGI"/>
</dbReference>
<dbReference type="GO" id="GO:0003682">
    <property type="term" value="F:chromatin binding"/>
    <property type="evidence" value="ECO:0007669"/>
    <property type="project" value="Ensembl"/>
</dbReference>
<dbReference type="GO" id="GO:0003684">
    <property type="term" value="F:damaged DNA binding"/>
    <property type="evidence" value="ECO:0000315"/>
    <property type="project" value="MGI"/>
</dbReference>
<dbReference type="GO" id="GO:0032181">
    <property type="term" value="F:dinucleotide repeat insertion binding"/>
    <property type="evidence" value="ECO:0007669"/>
    <property type="project" value="Ensembl"/>
</dbReference>
<dbReference type="GO" id="GO:0003677">
    <property type="term" value="F:DNA binding"/>
    <property type="evidence" value="ECO:0000315"/>
    <property type="project" value="MGI"/>
</dbReference>
<dbReference type="GO" id="GO:0000400">
    <property type="term" value="F:four-way junction DNA binding"/>
    <property type="evidence" value="ECO:0007669"/>
    <property type="project" value="Ensembl"/>
</dbReference>
<dbReference type="GO" id="GO:0032137">
    <property type="term" value="F:guanine/thymine mispair binding"/>
    <property type="evidence" value="ECO:0000266"/>
    <property type="project" value="MGI"/>
</dbReference>
<dbReference type="GO" id="GO:0000287">
    <property type="term" value="F:magnesium ion binding"/>
    <property type="evidence" value="ECO:0007669"/>
    <property type="project" value="Ensembl"/>
</dbReference>
<dbReference type="GO" id="GO:0030983">
    <property type="term" value="F:mismatched DNA binding"/>
    <property type="evidence" value="ECO:0000315"/>
    <property type="project" value="MGI"/>
</dbReference>
<dbReference type="GO" id="GO:0032405">
    <property type="term" value="F:MutLalpha complex binding"/>
    <property type="evidence" value="ECO:0007669"/>
    <property type="project" value="Ensembl"/>
</dbReference>
<dbReference type="GO" id="GO:0032357">
    <property type="term" value="F:oxidized purine DNA binding"/>
    <property type="evidence" value="ECO:0007669"/>
    <property type="project" value="Ensembl"/>
</dbReference>
<dbReference type="GO" id="GO:0042803">
    <property type="term" value="F:protein homodimerization activity"/>
    <property type="evidence" value="ECO:0007669"/>
    <property type="project" value="Ensembl"/>
</dbReference>
<dbReference type="GO" id="GO:0032142">
    <property type="term" value="F:single guanine insertion binding"/>
    <property type="evidence" value="ECO:0007669"/>
    <property type="project" value="Ensembl"/>
</dbReference>
<dbReference type="GO" id="GO:0032143">
    <property type="term" value="F:single thymine insertion binding"/>
    <property type="evidence" value="ECO:0007669"/>
    <property type="project" value="Ensembl"/>
</dbReference>
<dbReference type="GO" id="GO:0003697">
    <property type="term" value="F:single-stranded DNA binding"/>
    <property type="evidence" value="ECO:0007669"/>
    <property type="project" value="Ensembl"/>
</dbReference>
<dbReference type="GO" id="GO:0030183">
    <property type="term" value="P:B cell differentiation"/>
    <property type="evidence" value="ECO:0000315"/>
    <property type="project" value="MGI"/>
</dbReference>
<dbReference type="GO" id="GO:0019724">
    <property type="term" value="P:B cell mediated immunity"/>
    <property type="evidence" value="ECO:0000315"/>
    <property type="project" value="MGI"/>
</dbReference>
<dbReference type="GO" id="GO:0008340">
    <property type="term" value="P:determination of adult lifespan"/>
    <property type="evidence" value="ECO:0000315"/>
    <property type="project" value="MGI"/>
</dbReference>
<dbReference type="GO" id="GO:0006974">
    <property type="term" value="P:DNA damage response"/>
    <property type="evidence" value="ECO:0000315"/>
    <property type="project" value="MGI"/>
</dbReference>
<dbReference type="GO" id="GO:0006281">
    <property type="term" value="P:DNA repair"/>
    <property type="evidence" value="ECO:0000315"/>
    <property type="project" value="MGI"/>
</dbReference>
<dbReference type="GO" id="GO:0006302">
    <property type="term" value="P:double-strand break repair"/>
    <property type="evidence" value="ECO:0000315"/>
    <property type="project" value="MGI"/>
</dbReference>
<dbReference type="GO" id="GO:0007281">
    <property type="term" value="P:germ cell development"/>
    <property type="evidence" value="ECO:0000315"/>
    <property type="project" value="MGI"/>
</dbReference>
<dbReference type="GO" id="GO:0001701">
    <property type="term" value="P:in utero embryonic development"/>
    <property type="evidence" value="ECO:0000316"/>
    <property type="project" value="MGI"/>
</dbReference>
<dbReference type="GO" id="GO:0008630">
    <property type="term" value="P:intrinsic apoptotic signaling pathway in response to DNA damage"/>
    <property type="evidence" value="ECO:0000315"/>
    <property type="project" value="MGI"/>
</dbReference>
<dbReference type="GO" id="GO:0042771">
    <property type="term" value="P:intrinsic apoptotic signaling pathway in response to DNA damage by p53 class mediator"/>
    <property type="evidence" value="ECO:0000316"/>
    <property type="project" value="MGI"/>
</dbReference>
<dbReference type="GO" id="GO:0045190">
    <property type="term" value="P:isotype switching"/>
    <property type="evidence" value="ECO:0000315"/>
    <property type="project" value="MGI"/>
</dbReference>
<dbReference type="GO" id="GO:0043570">
    <property type="term" value="P:maintenance of DNA repeat elements"/>
    <property type="evidence" value="ECO:0007669"/>
    <property type="project" value="Ensembl"/>
</dbReference>
<dbReference type="GO" id="GO:0008584">
    <property type="term" value="P:male gonad development"/>
    <property type="evidence" value="ECO:0000315"/>
    <property type="project" value="MGI"/>
</dbReference>
<dbReference type="GO" id="GO:0006298">
    <property type="term" value="P:mismatch repair"/>
    <property type="evidence" value="ECO:0000314"/>
    <property type="project" value="MGI"/>
</dbReference>
<dbReference type="GO" id="GO:0031573">
    <property type="term" value="P:mitotic intra-S DNA damage checkpoint signaling"/>
    <property type="evidence" value="ECO:0000316"/>
    <property type="project" value="MGI"/>
</dbReference>
<dbReference type="GO" id="GO:0045910">
    <property type="term" value="P:negative regulation of DNA recombination"/>
    <property type="evidence" value="ECO:0000315"/>
    <property type="project" value="MGI"/>
</dbReference>
<dbReference type="GO" id="GO:0043524">
    <property type="term" value="P:negative regulation of neuron apoptotic process"/>
    <property type="evidence" value="ECO:0000315"/>
    <property type="project" value="MGI"/>
</dbReference>
<dbReference type="GO" id="GO:0006119">
    <property type="term" value="P:oxidative phosphorylation"/>
    <property type="evidence" value="ECO:0000315"/>
    <property type="project" value="MGI"/>
</dbReference>
<dbReference type="GO" id="GO:0048298">
    <property type="term" value="P:positive regulation of isotype switching to IgA isotypes"/>
    <property type="evidence" value="ECO:0000315"/>
    <property type="project" value="CAFA"/>
</dbReference>
<dbReference type="GO" id="GO:0048304">
    <property type="term" value="P:positive regulation of isotype switching to IgG isotypes"/>
    <property type="evidence" value="ECO:0000315"/>
    <property type="project" value="CAFA"/>
</dbReference>
<dbReference type="GO" id="GO:0006301">
    <property type="term" value="P:postreplication repair"/>
    <property type="evidence" value="ECO:0000315"/>
    <property type="project" value="MGI"/>
</dbReference>
<dbReference type="GO" id="GO:0051726">
    <property type="term" value="P:regulation of cell cycle"/>
    <property type="evidence" value="ECO:0000315"/>
    <property type="project" value="MGI"/>
</dbReference>
<dbReference type="GO" id="GO:0010224">
    <property type="term" value="P:response to UV-B"/>
    <property type="evidence" value="ECO:0000315"/>
    <property type="project" value="MGI"/>
</dbReference>
<dbReference type="GO" id="GO:0010165">
    <property type="term" value="P:response to X-ray"/>
    <property type="evidence" value="ECO:0000315"/>
    <property type="project" value="MGI"/>
</dbReference>
<dbReference type="GO" id="GO:0016446">
    <property type="term" value="P:somatic hypermutation of immunoglobulin genes"/>
    <property type="evidence" value="ECO:0000315"/>
    <property type="project" value="MGI"/>
</dbReference>
<dbReference type="GO" id="GO:0016447">
    <property type="term" value="P:somatic recombination of immunoglobulin gene segments"/>
    <property type="evidence" value="ECO:0000315"/>
    <property type="project" value="MGI"/>
</dbReference>
<dbReference type="GO" id="GO:0002204">
    <property type="term" value="P:somatic recombination of immunoglobulin genes involved in immune response"/>
    <property type="evidence" value="ECO:0000316"/>
    <property type="project" value="MGI"/>
</dbReference>
<dbReference type="CDD" id="cd03285">
    <property type="entry name" value="ABC_MSH2_euk"/>
    <property type="match status" value="1"/>
</dbReference>
<dbReference type="FunFam" id="1.10.1420.10:FF:000003">
    <property type="entry name" value="DNA mismatch repair protein"/>
    <property type="match status" value="1"/>
</dbReference>
<dbReference type="FunFam" id="1.10.1420.10:FF:000009">
    <property type="entry name" value="DNA mismatch repair protein"/>
    <property type="match status" value="1"/>
</dbReference>
<dbReference type="FunFam" id="3.30.420.110:FF:000002">
    <property type="entry name" value="DNA mismatch repair protein"/>
    <property type="match status" value="1"/>
</dbReference>
<dbReference type="FunFam" id="3.40.1170.10:FF:000003">
    <property type="entry name" value="DNA mismatch repair protein"/>
    <property type="match status" value="1"/>
</dbReference>
<dbReference type="FunFam" id="3.40.50.300:FF:000523">
    <property type="entry name" value="DNA mismatch repair protein"/>
    <property type="match status" value="1"/>
</dbReference>
<dbReference type="Gene3D" id="1.10.1420.10">
    <property type="match status" value="2"/>
</dbReference>
<dbReference type="Gene3D" id="3.40.1170.10">
    <property type="entry name" value="DNA repair protein MutS, domain I"/>
    <property type="match status" value="1"/>
</dbReference>
<dbReference type="Gene3D" id="3.30.420.110">
    <property type="entry name" value="MutS, connector domain"/>
    <property type="match status" value="1"/>
</dbReference>
<dbReference type="Gene3D" id="3.40.50.300">
    <property type="entry name" value="P-loop containing nucleotide triphosphate hydrolases"/>
    <property type="match status" value="1"/>
</dbReference>
<dbReference type="InterPro" id="IPR011184">
    <property type="entry name" value="DNA_mismatch_repair_Msh2"/>
</dbReference>
<dbReference type="InterPro" id="IPR007695">
    <property type="entry name" value="DNA_mismatch_repair_MutS-lik_N"/>
</dbReference>
<dbReference type="InterPro" id="IPR000432">
    <property type="entry name" value="DNA_mismatch_repair_MutS_C"/>
</dbReference>
<dbReference type="InterPro" id="IPR007861">
    <property type="entry name" value="DNA_mismatch_repair_MutS_clamp"/>
</dbReference>
<dbReference type="InterPro" id="IPR007696">
    <property type="entry name" value="DNA_mismatch_repair_MutS_core"/>
</dbReference>
<dbReference type="InterPro" id="IPR016151">
    <property type="entry name" value="DNA_mismatch_repair_MutS_N"/>
</dbReference>
<dbReference type="InterPro" id="IPR036187">
    <property type="entry name" value="DNA_mismatch_repair_MutS_sf"/>
</dbReference>
<dbReference type="InterPro" id="IPR007860">
    <property type="entry name" value="DNA_mmatch_repair_MutS_con_dom"/>
</dbReference>
<dbReference type="InterPro" id="IPR032642">
    <property type="entry name" value="Msh2_ATP-bd"/>
</dbReference>
<dbReference type="InterPro" id="IPR045076">
    <property type="entry name" value="MutS"/>
</dbReference>
<dbReference type="InterPro" id="IPR036678">
    <property type="entry name" value="MutS_con_dom_sf"/>
</dbReference>
<dbReference type="InterPro" id="IPR027417">
    <property type="entry name" value="P-loop_NTPase"/>
</dbReference>
<dbReference type="NCBIfam" id="NF003810">
    <property type="entry name" value="PRK05399.1"/>
    <property type="match status" value="1"/>
</dbReference>
<dbReference type="PANTHER" id="PTHR11361:SF35">
    <property type="entry name" value="DNA MISMATCH REPAIR PROTEIN MSH2"/>
    <property type="match status" value="1"/>
</dbReference>
<dbReference type="PANTHER" id="PTHR11361">
    <property type="entry name" value="DNA MISMATCH REPAIR PROTEIN MUTS FAMILY MEMBER"/>
    <property type="match status" value="1"/>
</dbReference>
<dbReference type="Pfam" id="PF01624">
    <property type="entry name" value="MutS_I"/>
    <property type="match status" value="1"/>
</dbReference>
<dbReference type="Pfam" id="PF05188">
    <property type="entry name" value="MutS_II"/>
    <property type="match status" value="1"/>
</dbReference>
<dbReference type="Pfam" id="PF05192">
    <property type="entry name" value="MutS_III"/>
    <property type="match status" value="1"/>
</dbReference>
<dbReference type="Pfam" id="PF05190">
    <property type="entry name" value="MutS_IV"/>
    <property type="match status" value="1"/>
</dbReference>
<dbReference type="Pfam" id="PF00488">
    <property type="entry name" value="MutS_V"/>
    <property type="match status" value="1"/>
</dbReference>
<dbReference type="PIRSF" id="PIRSF005813">
    <property type="entry name" value="MSH2"/>
    <property type="match status" value="1"/>
</dbReference>
<dbReference type="SMART" id="SM00534">
    <property type="entry name" value="MUTSac"/>
    <property type="match status" value="1"/>
</dbReference>
<dbReference type="SMART" id="SM00533">
    <property type="entry name" value="MUTSd"/>
    <property type="match status" value="1"/>
</dbReference>
<dbReference type="SUPFAM" id="SSF53150">
    <property type="entry name" value="DNA repair protein MutS, domain II"/>
    <property type="match status" value="1"/>
</dbReference>
<dbReference type="SUPFAM" id="SSF48334">
    <property type="entry name" value="DNA repair protein MutS, domain III"/>
    <property type="match status" value="1"/>
</dbReference>
<dbReference type="SUPFAM" id="SSF52540">
    <property type="entry name" value="P-loop containing nucleoside triphosphate hydrolases"/>
    <property type="match status" value="1"/>
</dbReference>
<dbReference type="PROSITE" id="PS00486">
    <property type="entry name" value="DNA_MISMATCH_REPAIR_2"/>
    <property type="match status" value="1"/>
</dbReference>
<accession>P43247</accession>
<organism>
    <name type="scientific">Mus musculus</name>
    <name type="common">Mouse</name>
    <dbReference type="NCBI Taxonomy" id="10090"/>
    <lineage>
        <taxon>Eukaryota</taxon>
        <taxon>Metazoa</taxon>
        <taxon>Chordata</taxon>
        <taxon>Craniata</taxon>
        <taxon>Vertebrata</taxon>
        <taxon>Euteleostomi</taxon>
        <taxon>Mammalia</taxon>
        <taxon>Eutheria</taxon>
        <taxon>Euarchontoglires</taxon>
        <taxon>Glires</taxon>
        <taxon>Rodentia</taxon>
        <taxon>Myomorpha</taxon>
        <taxon>Muroidea</taxon>
        <taxon>Muridae</taxon>
        <taxon>Murinae</taxon>
        <taxon>Mus</taxon>
        <taxon>Mus</taxon>
    </lineage>
</organism>
<protein>
    <recommendedName>
        <fullName>DNA mismatch repair protein Msh2</fullName>
    </recommendedName>
    <alternativeName>
        <fullName>MutS protein homolog 2</fullName>
    </alternativeName>
</protein>
<gene>
    <name type="primary">Msh2</name>
</gene>
<comment type="function">
    <text evidence="2">Component of the post-replicative DNA mismatch repair system (MMR). Forms two different heterodimers: MutS alpha (MSH2-MSH6 heterodimer) and MutS beta (MSH2-MSH3 heterodimer) which binds to DNA mismatches thereby initiating DNA repair. When bound, heterodimers bend the DNA helix and shields approximately 20 base pairs. MutS alpha recognizes single base mismatches and dinucleotide insertion-deletion loops (IDL) in the DNA. MutS beta recognizes larger insertion-deletion loops up to 13 nucleotides long. After mismatch binding, MutS alpha or beta forms a ternary complex with the MutL alpha heterodimer, which is thought to be responsible for directing the downstream MMR events, including strand discrimination, excision, and resynthesis. Recruits DNA helicase MCM9 to chromatin which unwinds the mismatch containing DNA strand. ATP binding and hydrolysis play a pivotal role in mismatch repair functions. The ATPase activity associated with MutS alpha regulates binding similar to a molecular switch: mismatched DNA provokes ADP--&gt;ATP exchange, resulting in a discernible conformational transition that converts MutS alpha into a sliding clamp capable of hydrolysis-independent diffusion along the DNA backbone. This transition is crucial for mismatch repair. MutS alpha may also play a role in DNA homologous recombination repair. In melanocytes may modulate both UV-B-induced cell cycle regulation and apoptosis.</text>
</comment>
<comment type="subunit">
    <text evidence="2">Component of the DNA mismatch repair (MMR) complex composed at least of MSH2, MSH3, MSH6, PMS1 and MLH1. Heterodimer consisting of MSH2-MSH6 (MutS alpha) or MSH2-MSH3 (MutS beta). Both heterodimers form a ternary complex with MutL alpha (MLH1-PMS1). Interacts with MCM9; the interaction recruits MCM9 to chromatin. Interacts with MCM8. Interacts with EXO1. Part of the BRCA1-associated genome surveillance complex (BASC), which contains BRCA1, MSH2, MSH6, MLH1, ATM, BLM, PMS2 and the RAD50-MRE11-NBS1 protein complex. This association could be a dynamic process changing throughout the cell cycle and within subnuclear domains. Interacts with ATR. Interacts with SLX4/BTBD12; this interaction is direct and links MutS beta to SLX4, a subunit of different structure-specific endonucleases. Interacts with SMARCAD1.</text>
</comment>
<comment type="subcellular location">
    <subcellularLocation>
        <location evidence="2">Nucleus</location>
    </subcellularLocation>
    <subcellularLocation>
        <location evidence="2">Chromosome</location>
    </subcellularLocation>
</comment>
<comment type="PTM">
    <text evidence="2">Sequentially deacetylated and polyubiquitinated by HDAC6, leading to MSH2 degradation.</text>
</comment>
<comment type="similarity">
    <text evidence="4">Belongs to the DNA mismatch repair MutS family.</text>
</comment>
<sequence length="935" mass="104151">MAVQPKETLQLEGAAEAGFVRFFEGMPEKPSTTVRLFDRGDFYTAHGEDALLAAREVFKTQGVIKYMGPAGSKTLQSVVLSKMNFESFVKDLLLVRQYRVEVYKNKAGNKASKENEWYLAFKASPGNLSQFEDILFGNNDMSASVGVMGIKMAVVDGQRHVGVGYVDSTQRKLGLCEFPENDQFSNLEALLIQIGPKECVLPGGETTGDMGKLRQVIQRGGILITERKRADFSTKDIYQDLNRLLKGKKGEQINSAALPEMENQVAVSSLSAVIKFLELLSDDSNFGQFELATFDFSQYMKLDMAAVRALNLFQGSVEDTTGSQSLAALLNKCKTAQGQRLVNQWIKQPLMDRNRIEERLNLVEAFVEDSELRQSLQEDLLRRFPDLNRLAKKFQRQAANLQDCYRLYQGINQLPSVIQALEKYEGRHQALLLAVFVTPLIDLRSDFSKFQEMIETTLDMDQVENHEFLVKPSFDPNLSELREVMDGLEKKMQSTLINAARGLGLDPGKQIKLDSSAQFGYYFRVTCKEEKVLRNNKNFSTVDIQKNGVKFTNSELSSLNEEYTKNKGEYEEAQDAIVKEIVNISSGYVEPMQTLNDVLAHLDAIVSFAHVSNAAPVPYVRPVILEKGKGRIILKASRHACVEVQDEVAFIPNDVHFEKDKQMFHIITGPNMGGKSTYIRQTGVIVLMAQIGCFVPCESAEVSIVDCILARVGAGDSQLKGVSTFMAEMLETASILRSATKDSLIIIDELGRGTSTYDGFGLAWAISDYIATKIGAFCMFATHFHELTALANQIPTVNNLHVTALTTEETLTMLYQVKKGVCDQSFGIHVAELANFPRHVIACAKQKALELEEFQNIGTSLGCDEAEPAAKRRCLEREQGEKIILEFLSKVKQVPFTAMSEESISAKLKQLKAEVVAKNNSFVNEIISRIKAPAP</sequence>
<proteinExistence type="evidence at protein level"/>